<evidence type="ECO:0000255" key="1"/>
<evidence type="ECO:0000305" key="2"/>
<feature type="signal peptide" evidence="1">
    <location>
        <begin position="1"/>
        <end position="22"/>
    </location>
</feature>
<feature type="chain" id="PRO_0000018742" description="Uncharacterized lipoprotein MPN_587">
    <location>
        <begin position="23"/>
        <end position="150"/>
    </location>
</feature>
<feature type="lipid moiety-binding region" description="N-palmitoyl cysteine" evidence="1">
    <location>
        <position position="23"/>
    </location>
</feature>
<feature type="lipid moiety-binding region" description="S-diacylglycerol cysteine" evidence="1">
    <location>
        <position position="23"/>
    </location>
</feature>
<organism>
    <name type="scientific">Mycoplasma pneumoniae (strain ATCC 29342 / M129 / Subtype 1)</name>
    <name type="common">Mycoplasmoides pneumoniae</name>
    <dbReference type="NCBI Taxonomy" id="272634"/>
    <lineage>
        <taxon>Bacteria</taxon>
        <taxon>Bacillati</taxon>
        <taxon>Mycoplasmatota</taxon>
        <taxon>Mycoplasmoidales</taxon>
        <taxon>Mycoplasmoidaceae</taxon>
        <taxon>Mycoplasmoides</taxon>
    </lineage>
</organism>
<accession>P75193</accession>
<dbReference type="EMBL" id="U00089">
    <property type="protein sequence ID" value="AAB95903.1"/>
    <property type="molecule type" value="Genomic_DNA"/>
</dbReference>
<dbReference type="PIR" id="S73581">
    <property type="entry name" value="S73581"/>
</dbReference>
<dbReference type="RefSeq" id="NP_110276.1">
    <property type="nucleotide sequence ID" value="NC_000912.1"/>
</dbReference>
<dbReference type="RefSeq" id="WP_010874944.1">
    <property type="nucleotide sequence ID" value="NC_000912.1"/>
</dbReference>
<dbReference type="STRING" id="272634.MPN_587"/>
<dbReference type="EnsemblBacteria" id="AAB95903">
    <property type="protein sequence ID" value="AAB95903"/>
    <property type="gene ID" value="MPN_587"/>
</dbReference>
<dbReference type="KEGG" id="mpn:MPN_587"/>
<dbReference type="PATRIC" id="fig|272634.6.peg.650"/>
<dbReference type="HOGENOM" id="CLU_1738506_0_0_14"/>
<dbReference type="OrthoDB" id="397369at2"/>
<dbReference type="BioCyc" id="MPNE272634:G1GJ3-957-MONOMER"/>
<dbReference type="Proteomes" id="UP000000808">
    <property type="component" value="Chromosome"/>
</dbReference>
<dbReference type="GO" id="GO:0005886">
    <property type="term" value="C:plasma membrane"/>
    <property type="evidence" value="ECO:0007669"/>
    <property type="project" value="UniProtKB-SubCell"/>
</dbReference>
<dbReference type="InterPro" id="IPR022382">
    <property type="entry name" value="Mycoplasma_peptidase_DUF31"/>
</dbReference>
<dbReference type="InterPro" id="IPR022381">
    <property type="entry name" value="Uncharacterised_MG067"/>
</dbReference>
<dbReference type="Pfam" id="PF01732">
    <property type="entry name" value="Mycop_pep_DUF31"/>
    <property type="match status" value="1"/>
</dbReference>
<dbReference type="PRINTS" id="PR00840">
    <property type="entry name" value="Y06768FAMILY"/>
</dbReference>
<proteinExistence type="inferred from homology"/>
<protein>
    <recommendedName>
        <fullName>Uncharacterized lipoprotein MPN_587</fullName>
    </recommendedName>
</protein>
<reference key="1">
    <citation type="journal article" date="1996" name="Nucleic Acids Res.">
        <title>Complete sequence analysis of the genome of the bacterium Mycoplasma pneumoniae.</title>
        <authorList>
            <person name="Himmelreich R."/>
            <person name="Hilbert H."/>
            <person name="Plagens H."/>
            <person name="Pirkl E."/>
            <person name="Li B.-C."/>
            <person name="Herrmann R."/>
        </authorList>
    </citation>
    <scope>NUCLEOTIDE SEQUENCE [LARGE SCALE GENOMIC DNA]</scope>
    <source>
        <strain>ATCC 29342 / M129 / Subtype 1</strain>
    </source>
</reference>
<sequence length="150" mass="16957">MVIALKRFSFLASIATLTVLNACATISLSDKSGEFYINNIPSSAELHRINYDLTFSLGFTNRIQTKKKNEVNFVAFYGTGLLIDWKEGNQYQPFRVYLATNVHVAAGLKNEADYLPYSQPDAELGWTVDFRLGKYTNVKDFVSPNENRIT</sequence>
<gene>
    <name type="ordered locus">MPN_587</name>
    <name type="ORF">D02_orf150</name>
    <name type="ORF">MP255</name>
</gene>
<keyword id="KW-1003">Cell membrane</keyword>
<keyword id="KW-0449">Lipoprotein</keyword>
<keyword id="KW-0472">Membrane</keyword>
<keyword id="KW-0564">Palmitate</keyword>
<keyword id="KW-1185">Reference proteome</keyword>
<keyword id="KW-0732">Signal</keyword>
<name>Y587_MYCPN</name>
<comment type="subcellular location">
    <subcellularLocation>
        <location evidence="2">Cell membrane</location>
        <topology evidence="2">Lipid-anchor</topology>
    </subcellularLocation>
</comment>
<comment type="similarity">
    <text evidence="2">Belongs to the MG067/MG068/MG395 family.</text>
</comment>